<feature type="signal peptide" evidence="3">
    <location>
        <begin position="1"/>
        <end position="30"/>
    </location>
</feature>
<feature type="chain" id="PRO_0000223518" description="Lectin beta chain" evidence="3">
    <location>
        <begin position="31"/>
        <end position="210"/>
    </location>
</feature>
<feature type="propeptide" id="PRO_0000223519" evidence="3">
    <location>
        <begin position="211"/>
        <end position="217"/>
    </location>
</feature>
<feature type="chain" id="PRO_0000223520" description="Lectin alpha chain" evidence="3">
    <location>
        <begin position="218"/>
        <end position="269"/>
    </location>
</feature>
<feature type="propeptide" id="PRO_0000223521" evidence="3">
    <location>
        <begin position="270"/>
        <end position="275"/>
    </location>
</feature>
<feature type="binding site" evidence="3">
    <location>
        <position position="111"/>
    </location>
    <ligand>
        <name>D-glucose</name>
        <dbReference type="ChEBI" id="CHEBI:4167"/>
    </ligand>
</feature>
<feature type="binding site" evidence="1">
    <location>
        <position position="129"/>
    </location>
    <ligand>
        <name>D-glucose</name>
        <dbReference type="ChEBI" id="CHEBI:4167"/>
    </ligand>
</feature>
<feature type="binding site" evidence="3">
    <location>
        <position position="149"/>
    </location>
    <ligand>
        <name>Mn(2+)</name>
        <dbReference type="ChEBI" id="CHEBI:29035"/>
    </ligand>
</feature>
<feature type="binding site" evidence="3">
    <location>
        <position position="151"/>
    </location>
    <ligand>
        <name>Ca(2+)</name>
        <dbReference type="ChEBI" id="CHEBI:29108"/>
    </ligand>
</feature>
<feature type="binding site" evidence="3">
    <location>
        <position position="151"/>
    </location>
    <ligand>
        <name>Mn(2+)</name>
        <dbReference type="ChEBI" id="CHEBI:29035"/>
    </ligand>
</feature>
<feature type="binding site" evidence="1">
    <location>
        <position position="153"/>
    </location>
    <ligand>
        <name>Ca(2+)</name>
        <dbReference type="ChEBI" id="CHEBI:29108"/>
    </ligand>
</feature>
<feature type="binding site" evidence="3">
    <location>
        <position position="155"/>
    </location>
    <ligand>
        <name>Ca(2+)</name>
        <dbReference type="ChEBI" id="CHEBI:29108"/>
    </ligand>
</feature>
<feature type="binding site" evidence="3">
    <location>
        <position position="159"/>
    </location>
    <ligand>
        <name>Ca(2+)</name>
        <dbReference type="ChEBI" id="CHEBI:29108"/>
    </ligand>
</feature>
<feature type="binding site" evidence="3">
    <location>
        <position position="159"/>
    </location>
    <ligand>
        <name>Mn(2+)</name>
        <dbReference type="ChEBI" id="CHEBI:29035"/>
    </ligand>
</feature>
<feature type="binding site" evidence="3">
    <location>
        <position position="166"/>
    </location>
    <ligand>
        <name>Mn(2+)</name>
        <dbReference type="ChEBI" id="CHEBI:29035"/>
    </ligand>
</feature>
<feature type="binding site" evidence="1">
    <location>
        <position position="246"/>
    </location>
    <ligand>
        <name>D-glucose</name>
        <dbReference type="ChEBI" id="CHEBI:4167"/>
    </ligand>
</feature>
<feature type="binding site" evidence="1">
    <location>
        <position position="247"/>
    </location>
    <ligand>
        <name>D-glucose</name>
        <dbReference type="ChEBI" id="CHEBI:4167"/>
    </ligand>
</feature>
<feature type="site" description="Cleavage" evidence="3">
    <location>
        <begin position="210"/>
        <end position="211"/>
    </location>
</feature>
<feature type="site" description="Cleavage" evidence="3">
    <location>
        <begin position="217"/>
        <end position="218"/>
    </location>
</feature>
<protein>
    <recommendedName>
        <fullName>Lectin</fullName>
    </recommendedName>
    <component>
        <recommendedName>
            <fullName>Lectin beta chain</fullName>
        </recommendedName>
    </component>
    <component>
        <recommendedName>
            <fullName>Lectin alpha chain</fullName>
        </recommendedName>
    </component>
</protein>
<sequence length="275" mass="30253">MASLQTQMISFYLIFLSILLTTIFFFKVNSTETTSFSITKFSPDQQNLIFQGDGYTTKGKLTLTKAVKSTVGRALYSTPIHIWDRDTGSVANFVTSFTFVIDAPSSYNVADGFTFFIAPVDTKPQTGGGYLGVFNSKEYDKTSQTVAVEFDTFYNAAWDPSNKERHIGIDVNSIKSVNTKSWNLQNGERANVVIAFNAATNVLTVTLTYPNSLEEENVTSYTLNEVVPLKDVVPEWVRIGFSATTGAEFAAHEVHSWSFHSELGGTSSSKQAADA</sequence>
<accession>Q8VXF2</accession>
<organism>
    <name type="scientific">Lens culinaris subsp. tomentosus</name>
    <name type="common">Lentil</name>
    <name type="synonym">Lens tomentosus</name>
    <dbReference type="NCBI Taxonomy" id="175770"/>
    <lineage>
        <taxon>Eukaryota</taxon>
        <taxon>Viridiplantae</taxon>
        <taxon>Streptophyta</taxon>
        <taxon>Embryophyta</taxon>
        <taxon>Tracheophyta</taxon>
        <taxon>Spermatophyta</taxon>
        <taxon>Magnoliopsida</taxon>
        <taxon>eudicotyledons</taxon>
        <taxon>Gunneridae</taxon>
        <taxon>Pentapetalae</taxon>
        <taxon>rosids</taxon>
        <taxon>fabids</taxon>
        <taxon>Fabales</taxon>
        <taxon>Fabaceae</taxon>
        <taxon>Papilionoideae</taxon>
        <taxon>50 kb inversion clade</taxon>
        <taxon>NPAAA clade</taxon>
        <taxon>Hologalegina</taxon>
        <taxon>IRL clade</taxon>
        <taxon>Fabeae</taxon>
        <taxon>Lens</taxon>
    </lineage>
</organism>
<reference evidence="5" key="1">
    <citation type="journal article" date="2004" name="Theor. Appl. Genet.">
        <title>Identification and isolation of lectin nucleotide sequences and species relationships in the genus Lens (Miller).</title>
        <authorList>
            <person name="Galasso I."/>
            <person name="Lioi L."/>
            <person name="Lanave C."/>
            <person name="Bollini R."/>
            <person name="Sparvoli F."/>
        </authorList>
    </citation>
    <scope>NUCLEOTIDE SEQUENCE [GENOMIC DNA]</scope>
    <source>
        <tissue evidence="5">Leaf</tissue>
    </source>
</reference>
<comment type="function">
    <text evidence="2">D-mannose specific lectin.</text>
</comment>
<comment type="subunit">
    <text evidence="1">Heterotetramer of two alpha and two beta chains.</text>
</comment>
<comment type="PTM">
    <text evidence="3">The mature form consists of two chains, alpha and beta, produced by cleavage of the immature protein. These remain cleaved, yet fold together to form one subunit (By similarity).</text>
</comment>
<comment type="miscellaneous">
    <text evidence="3">Binds two manganese (or other transition metal) ions and two calcium ions per heterotetramer. The metal ions are essential for the saccharide-binding activity (By similarity).</text>
</comment>
<comment type="similarity">
    <text evidence="4">Belongs to the leguminous lectin family.</text>
</comment>
<keyword id="KW-0106">Calcium</keyword>
<keyword id="KW-0430">Lectin</keyword>
<keyword id="KW-0464">Manganese</keyword>
<keyword id="KW-0465">Mannose-binding</keyword>
<keyword id="KW-0479">Metal-binding</keyword>
<keyword id="KW-0732">Signal</keyword>
<name>LEC_LENCT</name>
<evidence type="ECO:0000250" key="1"/>
<evidence type="ECO:0000250" key="2">
    <source>
        <dbReference type="UniProtKB" id="P02867"/>
    </source>
</evidence>
<evidence type="ECO:0000250" key="3">
    <source>
        <dbReference type="UniProtKB" id="P02870"/>
    </source>
</evidence>
<evidence type="ECO:0000255" key="4"/>
<evidence type="ECO:0000312" key="5">
    <source>
        <dbReference type="EMBL" id="CAD19070.2"/>
    </source>
</evidence>
<dbReference type="EMBL" id="AJ421799">
    <property type="protein sequence ID" value="CAD19070.2"/>
    <property type="molecule type" value="Genomic_DNA"/>
</dbReference>
<dbReference type="SMR" id="Q8VXF2"/>
<dbReference type="GO" id="GO:0005537">
    <property type="term" value="F:D-mannose binding"/>
    <property type="evidence" value="ECO:0007669"/>
    <property type="project" value="UniProtKB-KW"/>
</dbReference>
<dbReference type="GO" id="GO:0046872">
    <property type="term" value="F:metal ion binding"/>
    <property type="evidence" value="ECO:0007669"/>
    <property type="project" value="UniProtKB-KW"/>
</dbReference>
<dbReference type="CDD" id="cd06899">
    <property type="entry name" value="lectin_legume_LecRK_Arcelin_ConA"/>
    <property type="match status" value="1"/>
</dbReference>
<dbReference type="FunFam" id="2.60.120.200:FF:000237">
    <property type="entry name" value="Mannose/glucose-specific lectin"/>
    <property type="match status" value="1"/>
</dbReference>
<dbReference type="Gene3D" id="2.60.120.200">
    <property type="match status" value="1"/>
</dbReference>
<dbReference type="InterPro" id="IPR013320">
    <property type="entry name" value="ConA-like_dom_sf"/>
</dbReference>
<dbReference type="InterPro" id="IPR016363">
    <property type="entry name" value="L-lectin"/>
</dbReference>
<dbReference type="InterPro" id="IPR000985">
    <property type="entry name" value="Lectin_LegA_CS"/>
</dbReference>
<dbReference type="InterPro" id="IPR019825">
    <property type="entry name" value="Lectin_legB_Mn/Ca_BS"/>
</dbReference>
<dbReference type="InterPro" id="IPR001220">
    <property type="entry name" value="Legume_lectin_dom"/>
</dbReference>
<dbReference type="InterPro" id="IPR050258">
    <property type="entry name" value="Leguminous_Lectin"/>
</dbReference>
<dbReference type="PANTHER" id="PTHR32401">
    <property type="entry name" value="CONCANAVALIN A-LIKE LECTIN FAMILY PROTEIN"/>
    <property type="match status" value="1"/>
</dbReference>
<dbReference type="PANTHER" id="PTHR32401:SF45">
    <property type="entry name" value="LECTIN"/>
    <property type="match status" value="1"/>
</dbReference>
<dbReference type="Pfam" id="PF00139">
    <property type="entry name" value="Lectin_legB"/>
    <property type="match status" value="1"/>
</dbReference>
<dbReference type="PIRSF" id="PIRSF002690">
    <property type="entry name" value="L-type_lectin_plant"/>
    <property type="match status" value="1"/>
</dbReference>
<dbReference type="SUPFAM" id="SSF49899">
    <property type="entry name" value="Concanavalin A-like lectins/glucanases"/>
    <property type="match status" value="1"/>
</dbReference>
<dbReference type="PROSITE" id="PS00308">
    <property type="entry name" value="LECTIN_LEGUME_ALPHA"/>
    <property type="match status" value="1"/>
</dbReference>
<dbReference type="PROSITE" id="PS00307">
    <property type="entry name" value="LECTIN_LEGUME_BETA"/>
    <property type="match status" value="1"/>
</dbReference>
<proteinExistence type="inferred from homology"/>